<accession>Q4UNI0</accession>
<keyword id="KW-0066">ATP synthesis</keyword>
<keyword id="KW-0997">Cell inner membrane</keyword>
<keyword id="KW-1003">Cell membrane</keyword>
<keyword id="KW-0138">CF(0)</keyword>
<keyword id="KW-0375">Hydrogen ion transport</keyword>
<keyword id="KW-0406">Ion transport</keyword>
<keyword id="KW-0472">Membrane</keyword>
<keyword id="KW-0812">Transmembrane</keyword>
<keyword id="KW-1133">Transmembrane helix</keyword>
<keyword id="KW-0813">Transport</keyword>
<evidence type="ECO:0000255" key="1">
    <source>
        <dbReference type="HAMAP-Rule" id="MF_01398"/>
    </source>
</evidence>
<proteinExistence type="inferred from homology"/>
<comment type="function">
    <text evidence="1">F(1)F(0) ATP synthase produces ATP from ADP in the presence of a proton or sodium gradient. F-type ATPases consist of two structural domains, F(1) containing the extramembraneous catalytic core and F(0) containing the membrane proton channel, linked together by a central stalk and a peripheral stalk. During catalysis, ATP synthesis in the catalytic domain of F(1) is coupled via a rotary mechanism of the central stalk subunits to proton translocation.</text>
</comment>
<comment type="function">
    <text evidence="1">Component of the F(0) channel, it forms part of the peripheral stalk, linking F(1) to F(0).</text>
</comment>
<comment type="subunit">
    <text evidence="1">F-type ATPases have 2 components, F(1) - the catalytic core - and F(0) - the membrane proton channel. F(1) has five subunits: alpha(3), beta(3), gamma(1), delta(1), epsilon(1). F(0) has three main subunits: a(1), b(2) and c(10-14). The alpha and beta chains form an alternating ring which encloses part of the gamma chain. F(1) is attached to F(0) by a central stalk formed by the gamma and epsilon chains, while a peripheral stalk is formed by the delta and b chains.</text>
</comment>
<comment type="subcellular location">
    <subcellularLocation>
        <location evidence="1">Cell inner membrane</location>
        <topology evidence="1">Single-pass membrane protein</topology>
    </subcellularLocation>
</comment>
<comment type="similarity">
    <text evidence="1">Belongs to the ATPase B chain family.</text>
</comment>
<gene>
    <name evidence="1" type="primary">atpF</name>
    <name type="ordered locus">RF_0027</name>
</gene>
<dbReference type="EMBL" id="CP000053">
    <property type="protein sequence ID" value="AAY60878.1"/>
    <property type="molecule type" value="Genomic_DNA"/>
</dbReference>
<dbReference type="SMR" id="Q4UNI0"/>
<dbReference type="STRING" id="315456.RF_0027"/>
<dbReference type="KEGG" id="rfe:RF_0027"/>
<dbReference type="eggNOG" id="COG0711">
    <property type="taxonomic scope" value="Bacteria"/>
</dbReference>
<dbReference type="HOGENOM" id="CLU_1676510_0_0_5"/>
<dbReference type="OrthoDB" id="7161077at2"/>
<dbReference type="Proteomes" id="UP000008548">
    <property type="component" value="Chromosome"/>
</dbReference>
<dbReference type="GO" id="GO:0005886">
    <property type="term" value="C:plasma membrane"/>
    <property type="evidence" value="ECO:0007669"/>
    <property type="project" value="UniProtKB-SubCell"/>
</dbReference>
<dbReference type="GO" id="GO:0045259">
    <property type="term" value="C:proton-transporting ATP synthase complex"/>
    <property type="evidence" value="ECO:0007669"/>
    <property type="project" value="UniProtKB-KW"/>
</dbReference>
<dbReference type="GO" id="GO:0046933">
    <property type="term" value="F:proton-transporting ATP synthase activity, rotational mechanism"/>
    <property type="evidence" value="ECO:0007669"/>
    <property type="project" value="UniProtKB-UniRule"/>
</dbReference>
<dbReference type="CDD" id="cd06503">
    <property type="entry name" value="ATP-synt_Fo_b"/>
    <property type="match status" value="1"/>
</dbReference>
<dbReference type="HAMAP" id="MF_01398">
    <property type="entry name" value="ATP_synth_b_bprime"/>
    <property type="match status" value="1"/>
</dbReference>
<dbReference type="InterPro" id="IPR002146">
    <property type="entry name" value="ATP_synth_b/b'su_bac/chlpt"/>
</dbReference>
<dbReference type="NCBIfam" id="NF005129">
    <property type="entry name" value="PRK06568.1"/>
    <property type="match status" value="1"/>
</dbReference>
<dbReference type="Pfam" id="PF00430">
    <property type="entry name" value="ATP-synt_B"/>
    <property type="match status" value="1"/>
</dbReference>
<sequence>MNFLDESFWLAVSFIIFVYLIYRPAKKAILNSLDAKILEVQEKVLKAEKLKEDAALLFEQTNAQIQKLETLRSQMIEESNEVTKKIIQEKTKEIEEFLEHKKSDAIQLIQNQKSTATKELQDEFCDEVIKLVSEYFQSAKFSESNIAKNLMDKSDSSHNNDKST</sequence>
<reference key="1">
    <citation type="journal article" date="2005" name="PLoS Biol.">
        <title>The genome sequence of Rickettsia felis identifies the first putative conjugative plasmid in an obligate intracellular parasite.</title>
        <authorList>
            <person name="Ogata H."/>
            <person name="Renesto P."/>
            <person name="Audic S."/>
            <person name="Robert C."/>
            <person name="Blanc G."/>
            <person name="Fournier P.-E."/>
            <person name="Parinello H."/>
            <person name="Claverie J.-M."/>
            <person name="Raoult D."/>
        </authorList>
    </citation>
    <scope>NUCLEOTIDE SEQUENCE [LARGE SCALE GENOMIC DNA]</scope>
    <source>
        <strain>ATCC VR-1525 / URRWXCal2</strain>
    </source>
</reference>
<feature type="chain" id="PRO_0000288723" description="ATP synthase subunit b">
    <location>
        <begin position="1"/>
        <end position="164"/>
    </location>
</feature>
<feature type="transmembrane region" description="Helical" evidence="1">
    <location>
        <begin position="7"/>
        <end position="25"/>
    </location>
</feature>
<protein>
    <recommendedName>
        <fullName evidence="1">ATP synthase subunit b</fullName>
    </recommendedName>
    <alternativeName>
        <fullName evidence="1">ATP synthase F(0) sector subunit b</fullName>
    </alternativeName>
    <alternativeName>
        <fullName evidence="1">ATPase subunit I</fullName>
    </alternativeName>
    <alternativeName>
        <fullName evidence="1">F-type ATPase subunit b</fullName>
        <shortName evidence="1">F-ATPase subunit b</shortName>
    </alternativeName>
</protein>
<organism>
    <name type="scientific">Rickettsia felis (strain ATCC VR-1525 / URRWXCal2)</name>
    <name type="common">Rickettsia azadi</name>
    <dbReference type="NCBI Taxonomy" id="315456"/>
    <lineage>
        <taxon>Bacteria</taxon>
        <taxon>Pseudomonadati</taxon>
        <taxon>Pseudomonadota</taxon>
        <taxon>Alphaproteobacteria</taxon>
        <taxon>Rickettsiales</taxon>
        <taxon>Rickettsiaceae</taxon>
        <taxon>Rickettsieae</taxon>
        <taxon>Rickettsia</taxon>
        <taxon>spotted fever group</taxon>
    </lineage>
</organism>
<name>ATPF_RICFE</name>